<keyword id="KW-1185">Reference proteome</keyword>
<dbReference type="EMBL" id="CP000478">
    <property type="protein sequence ID" value="ABK16790.1"/>
    <property type="molecule type" value="Genomic_DNA"/>
</dbReference>
<dbReference type="RefSeq" id="WP_011697961.1">
    <property type="nucleotide sequence ID" value="NC_008554.1"/>
</dbReference>
<dbReference type="FunCoup" id="A0LH88">
    <property type="interactions" value="30"/>
</dbReference>
<dbReference type="STRING" id="335543.Sfum_1097"/>
<dbReference type="KEGG" id="sfu:Sfum_1097"/>
<dbReference type="eggNOG" id="COG1671">
    <property type="taxonomic scope" value="Bacteria"/>
</dbReference>
<dbReference type="HOGENOM" id="CLU_106619_2_1_7"/>
<dbReference type="InParanoid" id="A0LH88"/>
<dbReference type="OrthoDB" id="9798918at2"/>
<dbReference type="Proteomes" id="UP000001784">
    <property type="component" value="Chromosome"/>
</dbReference>
<dbReference type="CDD" id="cd18720">
    <property type="entry name" value="PIN_YqxD-like"/>
    <property type="match status" value="1"/>
</dbReference>
<dbReference type="HAMAP" id="MF_00489">
    <property type="entry name" value="UPF0178"/>
    <property type="match status" value="1"/>
</dbReference>
<dbReference type="InterPro" id="IPR003791">
    <property type="entry name" value="UPF0178"/>
</dbReference>
<dbReference type="NCBIfam" id="NF001095">
    <property type="entry name" value="PRK00124.1"/>
    <property type="match status" value="1"/>
</dbReference>
<dbReference type="PANTHER" id="PTHR35146">
    <property type="entry name" value="UPF0178 PROTEIN YAII"/>
    <property type="match status" value="1"/>
</dbReference>
<dbReference type="PANTHER" id="PTHR35146:SF1">
    <property type="entry name" value="UPF0178 PROTEIN YAII"/>
    <property type="match status" value="1"/>
</dbReference>
<dbReference type="Pfam" id="PF02639">
    <property type="entry name" value="DUF188"/>
    <property type="match status" value="1"/>
</dbReference>
<name>Y1097_SYNFM</name>
<sequence length="153" mass="17275">MRIWVDADACPAPIKELIVRTARRLRIPAVFVANKFISIPDSACVSTVRVELGPEIVDEYIAKHAEPGDFTITQDIPLASVLVPKGVTVIDPRGELYTEENIRERLSIRNFMQDLREAGGITPGPRQFGQKEKQRFSDTLDREITKRFKLQGN</sequence>
<accession>A0LH88</accession>
<organism>
    <name type="scientific">Syntrophobacter fumaroxidans (strain DSM 10017 / MPOB)</name>
    <dbReference type="NCBI Taxonomy" id="335543"/>
    <lineage>
        <taxon>Bacteria</taxon>
        <taxon>Pseudomonadati</taxon>
        <taxon>Thermodesulfobacteriota</taxon>
        <taxon>Syntrophobacteria</taxon>
        <taxon>Syntrophobacterales</taxon>
        <taxon>Syntrophobacteraceae</taxon>
        <taxon>Syntrophobacter</taxon>
    </lineage>
</organism>
<reference key="1">
    <citation type="submission" date="2006-10" db="EMBL/GenBank/DDBJ databases">
        <title>Complete sequence of Syntrophobacter fumaroxidans MPOB.</title>
        <authorList>
            <consortium name="US DOE Joint Genome Institute"/>
            <person name="Copeland A."/>
            <person name="Lucas S."/>
            <person name="Lapidus A."/>
            <person name="Barry K."/>
            <person name="Detter J.C."/>
            <person name="Glavina del Rio T."/>
            <person name="Hammon N."/>
            <person name="Israni S."/>
            <person name="Pitluck S."/>
            <person name="Goltsman E.G."/>
            <person name="Martinez M."/>
            <person name="Schmutz J."/>
            <person name="Larimer F."/>
            <person name="Land M."/>
            <person name="Hauser L."/>
            <person name="Kyrpides N."/>
            <person name="Kim E."/>
            <person name="Boone D.R."/>
            <person name="Brockman F."/>
            <person name="Culley D."/>
            <person name="Ferry J."/>
            <person name="Gunsalus R."/>
            <person name="McInerney M.J."/>
            <person name="Morrison M."/>
            <person name="Plugge C."/>
            <person name="Rohlin L."/>
            <person name="Scholten J."/>
            <person name="Sieber J."/>
            <person name="Stams A.J.M."/>
            <person name="Worm P."/>
            <person name="Henstra A.M."/>
            <person name="Richardson P."/>
        </authorList>
    </citation>
    <scope>NUCLEOTIDE SEQUENCE [LARGE SCALE GENOMIC DNA]</scope>
    <source>
        <strain>DSM 10017 / MPOB</strain>
    </source>
</reference>
<feature type="chain" id="PRO_1000014452" description="UPF0178 protein Sfum_1097">
    <location>
        <begin position="1"/>
        <end position="153"/>
    </location>
</feature>
<comment type="similarity">
    <text evidence="1">Belongs to the UPF0178 family.</text>
</comment>
<protein>
    <recommendedName>
        <fullName evidence="1">UPF0178 protein Sfum_1097</fullName>
    </recommendedName>
</protein>
<evidence type="ECO:0000255" key="1">
    <source>
        <dbReference type="HAMAP-Rule" id="MF_00489"/>
    </source>
</evidence>
<proteinExistence type="inferred from homology"/>
<gene>
    <name type="ordered locus">Sfum_1097</name>
</gene>